<sequence length="360" mass="40469">MNIYDQLQAVEDRYEELGELLSDPEVVSDTKRFMALSKEEASTRETVAAYRQYKAIIQSIDDAEEMIKEAGGDPDIEEMAKEELKEAKAAKETYEDKLKLLLLPKDPNDDKNIILEIRGAAGGDEAALFAGDLLAMYQKFAESQGWRFEVMEASYNGVGGIKEVVAMVSGQSVYSKLKYESGAHRVQRVPVTESQGRVHTSTATVLVMPEVEEVEYDIDPKDLRIDIYHASGAGGQNVNKVATAVRIVHLPTNIKVEMQEERTQQKNRDKAMKIIRARVADHFAQIAQDEQDAERKSTIGTGDRSERIRTYNFPQNRVTDHRIGLTLQKLDTILSGKLDEIVDALVLYDQTQKLESLNNQ</sequence>
<protein>
    <recommendedName>
        <fullName evidence="1">Peptide chain release factor 1</fullName>
        <shortName evidence="1">RF-1</shortName>
    </recommendedName>
</protein>
<comment type="function">
    <text evidence="1">Peptide chain release factor 1 directs the termination of translation in response to the peptide chain termination codons UAG and UAA.</text>
</comment>
<comment type="subcellular location">
    <subcellularLocation>
        <location evidence="1">Cytoplasm</location>
    </subcellularLocation>
</comment>
<comment type="PTM">
    <text evidence="1">Methylated by PrmC. Methylation increases the termination efficiency of RF1.</text>
</comment>
<comment type="similarity">
    <text evidence="1">Belongs to the prokaryotic/mitochondrial release factor family.</text>
</comment>
<dbReference type="EMBL" id="FM204884">
    <property type="protein sequence ID" value="CAW99200.1"/>
    <property type="molecule type" value="Genomic_DNA"/>
</dbReference>
<dbReference type="SMR" id="C0MF07"/>
<dbReference type="KEGG" id="seq:SZO_09340"/>
<dbReference type="eggNOG" id="COG0216">
    <property type="taxonomic scope" value="Bacteria"/>
</dbReference>
<dbReference type="HOGENOM" id="CLU_036856_0_1_9"/>
<dbReference type="Proteomes" id="UP000001368">
    <property type="component" value="Chromosome"/>
</dbReference>
<dbReference type="GO" id="GO:0005737">
    <property type="term" value="C:cytoplasm"/>
    <property type="evidence" value="ECO:0007669"/>
    <property type="project" value="UniProtKB-SubCell"/>
</dbReference>
<dbReference type="GO" id="GO:0016149">
    <property type="term" value="F:translation release factor activity, codon specific"/>
    <property type="evidence" value="ECO:0007669"/>
    <property type="project" value="UniProtKB-UniRule"/>
</dbReference>
<dbReference type="FunFam" id="3.30.160.20:FF:000027">
    <property type="entry name" value="Peptide chain release factor 1"/>
    <property type="match status" value="1"/>
</dbReference>
<dbReference type="FunFam" id="3.30.70.1660:FF:000002">
    <property type="entry name" value="Peptide chain release factor 1"/>
    <property type="match status" value="1"/>
</dbReference>
<dbReference type="FunFam" id="3.30.70.1660:FF:000004">
    <property type="entry name" value="Peptide chain release factor 1"/>
    <property type="match status" value="1"/>
</dbReference>
<dbReference type="Gene3D" id="3.30.160.20">
    <property type="match status" value="1"/>
</dbReference>
<dbReference type="Gene3D" id="3.30.70.1660">
    <property type="match status" value="2"/>
</dbReference>
<dbReference type="Gene3D" id="6.10.140.1950">
    <property type="match status" value="1"/>
</dbReference>
<dbReference type="HAMAP" id="MF_00093">
    <property type="entry name" value="Rel_fac_1"/>
    <property type="match status" value="1"/>
</dbReference>
<dbReference type="InterPro" id="IPR005139">
    <property type="entry name" value="PCRF"/>
</dbReference>
<dbReference type="InterPro" id="IPR000352">
    <property type="entry name" value="Pep_chain_release_fac_I"/>
</dbReference>
<dbReference type="InterPro" id="IPR045853">
    <property type="entry name" value="Pep_chain_release_fac_I_sf"/>
</dbReference>
<dbReference type="InterPro" id="IPR050057">
    <property type="entry name" value="Prokaryotic/Mito_RF"/>
</dbReference>
<dbReference type="InterPro" id="IPR004373">
    <property type="entry name" value="RF-1"/>
</dbReference>
<dbReference type="NCBIfam" id="TIGR00019">
    <property type="entry name" value="prfA"/>
    <property type="match status" value="1"/>
</dbReference>
<dbReference type="NCBIfam" id="NF001859">
    <property type="entry name" value="PRK00591.1"/>
    <property type="match status" value="1"/>
</dbReference>
<dbReference type="PANTHER" id="PTHR43804">
    <property type="entry name" value="LD18447P"/>
    <property type="match status" value="1"/>
</dbReference>
<dbReference type="PANTHER" id="PTHR43804:SF7">
    <property type="entry name" value="LD18447P"/>
    <property type="match status" value="1"/>
</dbReference>
<dbReference type="Pfam" id="PF03462">
    <property type="entry name" value="PCRF"/>
    <property type="match status" value="1"/>
</dbReference>
<dbReference type="Pfam" id="PF00472">
    <property type="entry name" value="RF-1"/>
    <property type="match status" value="1"/>
</dbReference>
<dbReference type="SMART" id="SM00937">
    <property type="entry name" value="PCRF"/>
    <property type="match status" value="1"/>
</dbReference>
<dbReference type="SUPFAM" id="SSF75620">
    <property type="entry name" value="Release factor"/>
    <property type="match status" value="1"/>
</dbReference>
<dbReference type="PROSITE" id="PS00745">
    <property type="entry name" value="RF_PROK_I"/>
    <property type="match status" value="1"/>
</dbReference>
<reference key="1">
    <citation type="journal article" date="2009" name="PLoS Pathog.">
        <title>Genomic evidence for the evolution of Streptococcus equi: host restriction, increased virulence, and genetic exchange with human pathogens.</title>
        <authorList>
            <person name="Holden M.T.G."/>
            <person name="Heather Z."/>
            <person name="Paillot R."/>
            <person name="Steward K.F."/>
            <person name="Webb K."/>
            <person name="Ainslie F."/>
            <person name="Jourdan T."/>
            <person name="Bason N.C."/>
            <person name="Holroyd N.E."/>
            <person name="Mungall K."/>
            <person name="Quail M.A."/>
            <person name="Sanders M."/>
            <person name="Simmonds M."/>
            <person name="Willey D."/>
            <person name="Brooks K."/>
            <person name="Aanensen D.M."/>
            <person name="Spratt B.G."/>
            <person name="Jolley K.A."/>
            <person name="Maiden M.C.J."/>
            <person name="Kehoe M."/>
            <person name="Chanter N."/>
            <person name="Bentley S.D."/>
            <person name="Robinson C."/>
            <person name="Maskell D.J."/>
            <person name="Parkhill J."/>
            <person name="Waller A.S."/>
        </authorList>
    </citation>
    <scope>NUCLEOTIDE SEQUENCE [LARGE SCALE GENOMIC DNA]</scope>
    <source>
        <strain>H70</strain>
    </source>
</reference>
<evidence type="ECO:0000255" key="1">
    <source>
        <dbReference type="HAMAP-Rule" id="MF_00093"/>
    </source>
</evidence>
<evidence type="ECO:0000256" key="2">
    <source>
        <dbReference type="SAM" id="MobiDB-lite"/>
    </source>
</evidence>
<proteinExistence type="inferred from homology"/>
<name>RF1_STRS7</name>
<accession>C0MF07</accession>
<gene>
    <name evidence="1" type="primary">prfA</name>
    <name type="ordered locus">SZO_09340</name>
</gene>
<feature type="chain" id="PRO_1000202703" description="Peptide chain release factor 1">
    <location>
        <begin position="1"/>
        <end position="360"/>
    </location>
</feature>
<feature type="region of interest" description="Disordered" evidence="2">
    <location>
        <begin position="288"/>
        <end position="308"/>
    </location>
</feature>
<feature type="compositionally biased region" description="Basic and acidic residues" evidence="2">
    <location>
        <begin position="293"/>
        <end position="308"/>
    </location>
</feature>
<feature type="modified residue" description="N5-methylglutamine" evidence="1">
    <location>
        <position position="236"/>
    </location>
</feature>
<keyword id="KW-0963">Cytoplasm</keyword>
<keyword id="KW-0488">Methylation</keyword>
<keyword id="KW-0648">Protein biosynthesis</keyword>
<organism>
    <name type="scientific">Streptococcus equi subsp. zooepidemicus (strain H70)</name>
    <dbReference type="NCBI Taxonomy" id="553483"/>
    <lineage>
        <taxon>Bacteria</taxon>
        <taxon>Bacillati</taxon>
        <taxon>Bacillota</taxon>
        <taxon>Bacilli</taxon>
        <taxon>Lactobacillales</taxon>
        <taxon>Streptococcaceae</taxon>
        <taxon>Streptococcus</taxon>
    </lineage>
</organism>